<gene>
    <name type="primary">ID1</name>
    <name type="synonym">BHLHB24</name>
    <name type="synonym">ID</name>
</gene>
<name>ID1_HUMAN</name>
<accession>P41134</accession>
<accession>A8K537</accession>
<accession>E1P5L4</accession>
<accession>O00651</accession>
<accession>O00652</accession>
<accession>Q16371</accession>
<accession>Q16377</accession>
<accession>Q5TE66</accession>
<accession>Q5TE67</accession>
<accession>Q969Z7</accession>
<accession>Q9H0Z5</accession>
<accession>Q9H109</accession>
<feature type="chain" id="PRO_0000127236" description="DNA-binding protein inhibitor ID-1">
    <location>
        <begin position="1"/>
        <end position="155"/>
    </location>
</feature>
<feature type="domain" description="bHLH" evidence="2">
    <location>
        <begin position="53"/>
        <end position="105"/>
    </location>
</feature>
<feature type="short sequence motif" description="Nuclear export signal" evidence="1">
    <location>
        <begin position="98"/>
        <end position="111"/>
    </location>
</feature>
<feature type="splice variant" id="VSP_002108" description="In isoform ID-B." evidence="4 5">
    <original>AACVPADDRILCR</original>
    <variation>VRSRSDH</variation>
    <location>
        <begin position="143"/>
        <end position="155"/>
    </location>
</feature>
<feature type="sequence variant" id="VAR_049544" description="In dbSNP:rs1802548.">
    <original>N</original>
    <variation>D</variation>
    <location>
        <position position="63"/>
    </location>
</feature>
<feature type="sequence conflict" description="In Ref. 2; BAA02988/BAA02989." evidence="6" ref="2">
    <original>S</original>
    <variation>T</variation>
    <location>
        <position position="16"/>
    </location>
</feature>
<feature type="sequence conflict" description="In Ref. 1 and 2." evidence="6" ref="1 2">
    <original>A</original>
    <variation>R</variation>
    <location>
        <position position="46"/>
    </location>
</feature>
<feature type="sequence conflict" description="In Ref. 1 and 2." evidence="6" ref="1 2">
    <location>
        <position position="48"/>
    </location>
</feature>
<protein>
    <recommendedName>
        <fullName>DNA-binding protein inhibitor ID-1</fullName>
    </recommendedName>
    <alternativeName>
        <fullName>Class B basic helix-loop-helix protein 24</fullName>
        <shortName>bHLHb24</shortName>
    </alternativeName>
    <alternativeName>
        <fullName>Inhibitor of DNA binding 1</fullName>
    </alternativeName>
    <alternativeName>
        <fullName>Inhibitor of differentiation 1</fullName>
    </alternativeName>
</protein>
<keyword id="KW-0025">Alternative splicing</keyword>
<keyword id="KW-0090">Biological rhythms</keyword>
<keyword id="KW-0963">Cytoplasm</keyword>
<keyword id="KW-0217">Developmental protein</keyword>
<keyword id="KW-0539">Nucleus</keyword>
<keyword id="KW-1267">Proteomics identification</keyword>
<keyword id="KW-1185">Reference proteome</keyword>
<keyword id="KW-0678">Repressor</keyword>
<keyword id="KW-0804">Transcription</keyword>
<keyword id="KW-0805">Transcription regulation</keyword>
<sequence>MKVASGSTATAAAGPSCALKAGKTASGAGEVVRCLSEQSVAISRCAGGAGARLPALLDEQQVNVLLYDMNGCYSRLKELVPTLPQNRKVSKVEILQHVIDYIRDLQLELNSESEVGTPGGRGLPVRAPLSTLNGEISALTAEAACVPADDRILCR</sequence>
<evidence type="ECO:0000250" key="1"/>
<evidence type="ECO:0000255" key="2">
    <source>
        <dbReference type="PROSITE-ProRule" id="PRU00981"/>
    </source>
</evidence>
<evidence type="ECO:0000269" key="3">
    <source>
    </source>
</evidence>
<evidence type="ECO:0000303" key="4">
    <source>
    </source>
</evidence>
<evidence type="ECO:0000303" key="5">
    <source>
    </source>
</evidence>
<evidence type="ECO:0000305" key="6"/>
<reference key="1">
    <citation type="journal article" date="1994" name="Biochim. Biophys. Acta">
        <title>Nucleotide sequence of the cDNA encoding human helix-loop-helix Id-1 protein: identification of functionally conserved residues common to Id proteins.</title>
        <authorList>
            <person name="Deed R.W."/>
            <person name="Jasiok M."/>
            <person name="Norton J.D."/>
        </authorList>
    </citation>
    <scope>NUCLEOTIDE SEQUENCE [MRNA] (ISOFORM ID-A)</scope>
    <source>
        <tissue>Placenta</tissue>
    </source>
</reference>
<reference key="2">
    <citation type="journal article" date="1994" name="J. Biol. Chem.">
        <title>Id-related genes encoding helix-loop-helix proteins are required for G1 progression and are repressed in senescent human fibroblasts.</title>
        <authorList>
            <person name="Hara E."/>
            <person name="Yamaguchi T."/>
            <person name="Nojima H."/>
            <person name="Ide T."/>
            <person name="Campisi J."/>
            <person name="Okayama H."/>
            <person name="Oda K."/>
        </authorList>
    </citation>
    <scope>NUCLEOTIDE SEQUENCE [MRNA] (ISOFORMS ID-A AND ID-B)</scope>
    <source>
        <tissue>Lung</tissue>
    </source>
</reference>
<reference key="3">
    <citation type="journal article" date="1995" name="Brain Res. Mol. Brain Res.">
        <title>Id gene expression during development and molecular cloning of the human Id-1 gene.</title>
        <authorList>
            <person name="Zhu W."/>
            <person name="Dahmen J."/>
            <person name="Bulfone A."/>
            <person name="Rigolet M."/>
            <person name="Hernandez M.-C."/>
            <person name="Kuo W.L."/>
            <person name="Puelles L."/>
            <person name="Rubenstein J.L.R."/>
            <person name="Israel M.A."/>
        </authorList>
    </citation>
    <scope>NUCLEOTIDE SEQUENCE [MRNA] (ISOFORMS ID-A AND ID-B)</scope>
</reference>
<reference key="4">
    <citation type="journal article" date="1997" name="Biochem. Biophys. Res. Commun.">
        <title>Genomic organization, sequence, and chromosomal localization of the human helix-loop-helix Id1 gene.</title>
        <authorList>
            <person name="Nehlin J.O."/>
            <person name="Hara E."/>
            <person name="Kuo W.L."/>
            <person name="Collins C."/>
            <person name="Campisi J."/>
        </authorList>
    </citation>
    <scope>NUCLEOTIDE SEQUENCE [GENOMIC DNA]</scope>
    <source>
        <tissue>Placenta</tissue>
    </source>
</reference>
<reference key="5">
    <citation type="submission" date="2003-05" db="EMBL/GenBank/DDBJ databases">
        <title>Cloning of human full-length CDSs in BD Creator(TM) system donor vector.</title>
        <authorList>
            <person name="Kalnine N."/>
            <person name="Chen X."/>
            <person name="Rolfs A."/>
            <person name="Halleck A."/>
            <person name="Hines L."/>
            <person name="Eisenstein S."/>
            <person name="Koundinya M."/>
            <person name="Raphael J."/>
            <person name="Moreira D."/>
            <person name="Kelley T."/>
            <person name="LaBaer J."/>
            <person name="Lin Y."/>
            <person name="Phelan M."/>
            <person name="Farmer A."/>
        </authorList>
    </citation>
    <scope>NUCLEOTIDE SEQUENCE [LARGE SCALE MRNA] (ISOFORM ID-A)</scope>
</reference>
<reference key="6">
    <citation type="journal article" date="2004" name="Nat. Genet.">
        <title>Complete sequencing and characterization of 21,243 full-length human cDNAs.</title>
        <authorList>
            <person name="Ota T."/>
            <person name="Suzuki Y."/>
            <person name="Nishikawa T."/>
            <person name="Otsuki T."/>
            <person name="Sugiyama T."/>
            <person name="Irie R."/>
            <person name="Wakamatsu A."/>
            <person name="Hayashi K."/>
            <person name="Sato H."/>
            <person name="Nagai K."/>
            <person name="Kimura K."/>
            <person name="Makita H."/>
            <person name="Sekine M."/>
            <person name="Obayashi M."/>
            <person name="Nishi T."/>
            <person name="Shibahara T."/>
            <person name="Tanaka T."/>
            <person name="Ishii S."/>
            <person name="Yamamoto J."/>
            <person name="Saito K."/>
            <person name="Kawai Y."/>
            <person name="Isono Y."/>
            <person name="Nakamura Y."/>
            <person name="Nagahari K."/>
            <person name="Murakami K."/>
            <person name="Yasuda T."/>
            <person name="Iwayanagi T."/>
            <person name="Wagatsuma M."/>
            <person name="Shiratori A."/>
            <person name="Sudo H."/>
            <person name="Hosoiri T."/>
            <person name="Kaku Y."/>
            <person name="Kodaira H."/>
            <person name="Kondo H."/>
            <person name="Sugawara M."/>
            <person name="Takahashi M."/>
            <person name="Kanda K."/>
            <person name="Yokoi T."/>
            <person name="Furuya T."/>
            <person name="Kikkawa E."/>
            <person name="Omura Y."/>
            <person name="Abe K."/>
            <person name="Kamihara K."/>
            <person name="Katsuta N."/>
            <person name="Sato K."/>
            <person name="Tanikawa M."/>
            <person name="Yamazaki M."/>
            <person name="Ninomiya K."/>
            <person name="Ishibashi T."/>
            <person name="Yamashita H."/>
            <person name="Murakawa K."/>
            <person name="Fujimori K."/>
            <person name="Tanai H."/>
            <person name="Kimata M."/>
            <person name="Watanabe M."/>
            <person name="Hiraoka S."/>
            <person name="Chiba Y."/>
            <person name="Ishida S."/>
            <person name="Ono Y."/>
            <person name="Takiguchi S."/>
            <person name="Watanabe S."/>
            <person name="Yosida M."/>
            <person name="Hotuta T."/>
            <person name="Kusano J."/>
            <person name="Kanehori K."/>
            <person name="Takahashi-Fujii A."/>
            <person name="Hara H."/>
            <person name="Tanase T.-O."/>
            <person name="Nomura Y."/>
            <person name="Togiya S."/>
            <person name="Komai F."/>
            <person name="Hara R."/>
            <person name="Takeuchi K."/>
            <person name="Arita M."/>
            <person name="Imose N."/>
            <person name="Musashino K."/>
            <person name="Yuuki H."/>
            <person name="Oshima A."/>
            <person name="Sasaki N."/>
            <person name="Aotsuka S."/>
            <person name="Yoshikawa Y."/>
            <person name="Matsunawa H."/>
            <person name="Ichihara T."/>
            <person name="Shiohata N."/>
            <person name="Sano S."/>
            <person name="Moriya S."/>
            <person name="Momiyama H."/>
            <person name="Satoh N."/>
            <person name="Takami S."/>
            <person name="Terashima Y."/>
            <person name="Suzuki O."/>
            <person name="Nakagawa S."/>
            <person name="Senoh A."/>
            <person name="Mizoguchi H."/>
            <person name="Goto Y."/>
            <person name="Shimizu F."/>
            <person name="Wakebe H."/>
            <person name="Hishigaki H."/>
            <person name="Watanabe T."/>
            <person name="Sugiyama A."/>
            <person name="Takemoto M."/>
            <person name="Kawakami B."/>
            <person name="Yamazaki M."/>
            <person name="Watanabe K."/>
            <person name="Kumagai A."/>
            <person name="Itakura S."/>
            <person name="Fukuzumi Y."/>
            <person name="Fujimori Y."/>
            <person name="Komiyama M."/>
            <person name="Tashiro H."/>
            <person name="Tanigami A."/>
            <person name="Fujiwara T."/>
            <person name="Ono T."/>
            <person name="Yamada K."/>
            <person name="Fujii Y."/>
            <person name="Ozaki K."/>
            <person name="Hirao M."/>
            <person name="Ohmori Y."/>
            <person name="Kawabata A."/>
            <person name="Hikiji T."/>
            <person name="Kobatake N."/>
            <person name="Inagaki H."/>
            <person name="Ikema Y."/>
            <person name="Okamoto S."/>
            <person name="Okitani R."/>
            <person name="Kawakami T."/>
            <person name="Noguchi S."/>
            <person name="Itoh T."/>
            <person name="Shigeta K."/>
            <person name="Senba T."/>
            <person name="Matsumura K."/>
            <person name="Nakajima Y."/>
            <person name="Mizuno T."/>
            <person name="Morinaga M."/>
            <person name="Sasaki M."/>
            <person name="Togashi T."/>
            <person name="Oyama M."/>
            <person name="Hata H."/>
            <person name="Watanabe M."/>
            <person name="Komatsu T."/>
            <person name="Mizushima-Sugano J."/>
            <person name="Satoh T."/>
            <person name="Shirai Y."/>
            <person name="Takahashi Y."/>
            <person name="Nakagawa K."/>
            <person name="Okumura K."/>
            <person name="Nagase T."/>
            <person name="Nomura N."/>
            <person name="Kikuchi H."/>
            <person name="Masuho Y."/>
            <person name="Yamashita R."/>
            <person name="Nakai K."/>
            <person name="Yada T."/>
            <person name="Nakamura Y."/>
            <person name="Ohara O."/>
            <person name="Isogai T."/>
            <person name="Sugano S."/>
        </authorList>
    </citation>
    <scope>NUCLEOTIDE SEQUENCE [LARGE SCALE MRNA] (ISOFORM ID-A)</scope>
</reference>
<reference key="7">
    <citation type="journal article" date="2001" name="Nature">
        <title>The DNA sequence and comparative analysis of human chromosome 20.</title>
        <authorList>
            <person name="Deloukas P."/>
            <person name="Matthews L.H."/>
            <person name="Ashurst J.L."/>
            <person name="Burton J."/>
            <person name="Gilbert J.G.R."/>
            <person name="Jones M."/>
            <person name="Stavrides G."/>
            <person name="Almeida J.P."/>
            <person name="Babbage A.K."/>
            <person name="Bagguley C.L."/>
            <person name="Bailey J."/>
            <person name="Barlow K.F."/>
            <person name="Bates K.N."/>
            <person name="Beard L.M."/>
            <person name="Beare D.M."/>
            <person name="Beasley O.P."/>
            <person name="Bird C.P."/>
            <person name="Blakey S.E."/>
            <person name="Bridgeman A.M."/>
            <person name="Brown A.J."/>
            <person name="Buck D."/>
            <person name="Burrill W.D."/>
            <person name="Butler A.P."/>
            <person name="Carder C."/>
            <person name="Carter N.P."/>
            <person name="Chapman J.C."/>
            <person name="Clamp M."/>
            <person name="Clark G."/>
            <person name="Clark L.N."/>
            <person name="Clark S.Y."/>
            <person name="Clee C.M."/>
            <person name="Clegg S."/>
            <person name="Cobley V.E."/>
            <person name="Collier R.E."/>
            <person name="Connor R.E."/>
            <person name="Corby N.R."/>
            <person name="Coulson A."/>
            <person name="Coville G.J."/>
            <person name="Deadman R."/>
            <person name="Dhami P.D."/>
            <person name="Dunn M."/>
            <person name="Ellington A.G."/>
            <person name="Frankland J.A."/>
            <person name="Fraser A."/>
            <person name="French L."/>
            <person name="Garner P."/>
            <person name="Grafham D.V."/>
            <person name="Griffiths C."/>
            <person name="Griffiths M.N.D."/>
            <person name="Gwilliam R."/>
            <person name="Hall R.E."/>
            <person name="Hammond S."/>
            <person name="Harley J.L."/>
            <person name="Heath P.D."/>
            <person name="Ho S."/>
            <person name="Holden J.L."/>
            <person name="Howden P.J."/>
            <person name="Huckle E."/>
            <person name="Hunt A.R."/>
            <person name="Hunt S.E."/>
            <person name="Jekosch K."/>
            <person name="Johnson C.M."/>
            <person name="Johnson D."/>
            <person name="Kay M.P."/>
            <person name="Kimberley A.M."/>
            <person name="King A."/>
            <person name="Knights A."/>
            <person name="Laird G.K."/>
            <person name="Lawlor S."/>
            <person name="Lehvaeslaiho M.H."/>
            <person name="Leversha M.A."/>
            <person name="Lloyd C."/>
            <person name="Lloyd D.M."/>
            <person name="Lovell J.D."/>
            <person name="Marsh V.L."/>
            <person name="Martin S.L."/>
            <person name="McConnachie L.J."/>
            <person name="McLay K."/>
            <person name="McMurray A.A."/>
            <person name="Milne S.A."/>
            <person name="Mistry D."/>
            <person name="Moore M.J.F."/>
            <person name="Mullikin J.C."/>
            <person name="Nickerson T."/>
            <person name="Oliver K."/>
            <person name="Parker A."/>
            <person name="Patel R."/>
            <person name="Pearce T.A.V."/>
            <person name="Peck A.I."/>
            <person name="Phillimore B.J.C.T."/>
            <person name="Prathalingam S.R."/>
            <person name="Plumb R.W."/>
            <person name="Ramsay H."/>
            <person name="Rice C.M."/>
            <person name="Ross M.T."/>
            <person name="Scott C.E."/>
            <person name="Sehra H.K."/>
            <person name="Shownkeen R."/>
            <person name="Sims S."/>
            <person name="Skuce C.D."/>
            <person name="Smith M.L."/>
            <person name="Soderlund C."/>
            <person name="Steward C.A."/>
            <person name="Sulston J.E."/>
            <person name="Swann R.M."/>
            <person name="Sycamore N."/>
            <person name="Taylor R."/>
            <person name="Tee L."/>
            <person name="Thomas D.W."/>
            <person name="Thorpe A."/>
            <person name="Tracey A."/>
            <person name="Tromans A.C."/>
            <person name="Vaudin M."/>
            <person name="Wall M."/>
            <person name="Wallis J.M."/>
            <person name="Whitehead S.L."/>
            <person name="Whittaker P."/>
            <person name="Willey D.L."/>
            <person name="Williams L."/>
            <person name="Williams S.A."/>
            <person name="Wilming L."/>
            <person name="Wray P.W."/>
            <person name="Hubbard T."/>
            <person name="Durbin R.M."/>
            <person name="Bentley D.R."/>
            <person name="Beck S."/>
            <person name="Rogers J."/>
        </authorList>
    </citation>
    <scope>NUCLEOTIDE SEQUENCE [LARGE SCALE GENOMIC DNA]</scope>
</reference>
<reference key="8">
    <citation type="submission" date="2005-09" db="EMBL/GenBank/DDBJ databases">
        <authorList>
            <person name="Mural R.J."/>
            <person name="Istrail S."/>
            <person name="Sutton G.G."/>
            <person name="Florea L."/>
            <person name="Halpern A.L."/>
            <person name="Mobarry C.M."/>
            <person name="Lippert R."/>
            <person name="Walenz B."/>
            <person name="Shatkay H."/>
            <person name="Dew I."/>
            <person name="Miller J.R."/>
            <person name="Flanigan M.J."/>
            <person name="Edwards N.J."/>
            <person name="Bolanos R."/>
            <person name="Fasulo D."/>
            <person name="Halldorsson B.V."/>
            <person name="Hannenhalli S."/>
            <person name="Turner R."/>
            <person name="Yooseph S."/>
            <person name="Lu F."/>
            <person name="Nusskern D.R."/>
            <person name="Shue B.C."/>
            <person name="Zheng X.H."/>
            <person name="Zhong F."/>
            <person name="Delcher A.L."/>
            <person name="Huson D.H."/>
            <person name="Kravitz S.A."/>
            <person name="Mouchard L."/>
            <person name="Reinert K."/>
            <person name="Remington K.A."/>
            <person name="Clark A.G."/>
            <person name="Waterman M.S."/>
            <person name="Eichler E.E."/>
            <person name="Adams M.D."/>
            <person name="Hunkapiller M.W."/>
            <person name="Myers E.W."/>
            <person name="Venter J.C."/>
        </authorList>
    </citation>
    <scope>NUCLEOTIDE SEQUENCE [LARGE SCALE GENOMIC DNA]</scope>
</reference>
<reference key="9">
    <citation type="journal article" date="2004" name="Genome Res.">
        <title>The status, quality, and expansion of the NIH full-length cDNA project: the Mammalian Gene Collection (MGC).</title>
        <authorList>
            <consortium name="The MGC Project Team"/>
        </authorList>
    </citation>
    <scope>NUCLEOTIDE SEQUENCE [LARGE SCALE MRNA] (ISOFORM ID-A)</scope>
    <source>
        <tissue>Ovary</tissue>
        <tissue>Skin</tissue>
    </source>
</reference>
<reference key="10">
    <citation type="journal article" date="2010" name="J. Biol. Chem.">
        <title>The transcriptional repressor ID2 can interact with the canonical clock components CLOCK and BMAL1 and mediate inhibitory effects on mPer1 expression.</title>
        <authorList>
            <person name="Ward S.M."/>
            <person name="Fernando S.J."/>
            <person name="Hou T.Y."/>
            <person name="Duffield G.E."/>
        </authorList>
    </citation>
    <scope>INTERACTION WITH CLOCK AND BMAL1</scope>
</reference>
<proteinExistence type="evidence at protein level"/>
<dbReference type="EMBL" id="X77956">
    <property type="protein sequence ID" value="CAA54920.1"/>
    <property type="molecule type" value="mRNA"/>
</dbReference>
<dbReference type="EMBL" id="D13889">
    <property type="protein sequence ID" value="BAA02988.1"/>
    <property type="molecule type" value="mRNA"/>
</dbReference>
<dbReference type="EMBL" id="D13890">
    <property type="protein sequence ID" value="BAA02989.1"/>
    <property type="molecule type" value="mRNA"/>
</dbReference>
<dbReference type="EMBL" id="S78986">
    <property type="protein sequence ID" value="AAB35037.1"/>
    <property type="molecule type" value="mRNA"/>
</dbReference>
<dbReference type="EMBL" id="S78825">
    <property type="protein sequence ID" value="AAB35038.1"/>
    <property type="molecule type" value="mRNA"/>
</dbReference>
<dbReference type="EMBL" id="U57645">
    <property type="protein sequence ID" value="AAC13882.1"/>
    <property type="molecule type" value="Genomic_DNA"/>
</dbReference>
<dbReference type="EMBL" id="U57645">
    <property type="protein sequence ID" value="AAC13883.1"/>
    <property type="molecule type" value="Genomic_DNA"/>
</dbReference>
<dbReference type="EMBL" id="BT007443">
    <property type="protein sequence ID" value="AAP36111.1"/>
    <property type="molecule type" value="mRNA"/>
</dbReference>
<dbReference type="EMBL" id="AK291152">
    <property type="protein sequence ID" value="BAF83841.1"/>
    <property type="molecule type" value="mRNA"/>
</dbReference>
<dbReference type="EMBL" id="AL110115">
    <property type="status" value="NOT_ANNOTATED_CDS"/>
    <property type="molecule type" value="Genomic_DNA"/>
</dbReference>
<dbReference type="EMBL" id="AL117381">
    <property type="status" value="NOT_ANNOTATED_CDS"/>
    <property type="molecule type" value="Genomic_DNA"/>
</dbReference>
<dbReference type="EMBL" id="CH471077">
    <property type="protein sequence ID" value="EAW76432.1"/>
    <property type="molecule type" value="Genomic_DNA"/>
</dbReference>
<dbReference type="EMBL" id="CH471077">
    <property type="protein sequence ID" value="EAW76434.1"/>
    <property type="molecule type" value="Genomic_DNA"/>
</dbReference>
<dbReference type="EMBL" id="BC000613">
    <property type="protein sequence ID" value="AAH00613.1"/>
    <property type="molecule type" value="mRNA"/>
</dbReference>
<dbReference type="EMBL" id="BC012420">
    <property type="protein sequence ID" value="AAH12420.1"/>
    <property type="molecule type" value="mRNA"/>
</dbReference>
<dbReference type="CCDS" id="CCDS13185.1">
    <molecule id="P41134-1"/>
</dbReference>
<dbReference type="CCDS" id="CCDS13186.1">
    <molecule id="P41134-2"/>
</dbReference>
<dbReference type="PIR" id="A49727">
    <property type="entry name" value="A49727"/>
</dbReference>
<dbReference type="PIR" id="B49727">
    <property type="entry name" value="B49727"/>
</dbReference>
<dbReference type="PIR" id="JC5395">
    <property type="entry name" value="JC5395"/>
</dbReference>
<dbReference type="PIR" id="JC5396">
    <property type="entry name" value="JC5396"/>
</dbReference>
<dbReference type="PIR" id="S47524">
    <property type="entry name" value="S47524"/>
</dbReference>
<dbReference type="RefSeq" id="NP_002156.2">
    <molecule id="P41134-1"/>
    <property type="nucleotide sequence ID" value="NM_002165.3"/>
</dbReference>
<dbReference type="RefSeq" id="NP_851998.1">
    <molecule id="P41134-2"/>
    <property type="nucleotide sequence ID" value="NM_181353.3"/>
</dbReference>
<dbReference type="SMR" id="P41134"/>
<dbReference type="BioGRID" id="109623">
    <property type="interactions" value="66"/>
</dbReference>
<dbReference type="DIP" id="DIP-38112N"/>
<dbReference type="FunCoup" id="P41134">
    <property type="interactions" value="1895"/>
</dbReference>
<dbReference type="IntAct" id="P41134">
    <property type="interactions" value="45"/>
</dbReference>
<dbReference type="MINT" id="P41134"/>
<dbReference type="STRING" id="9606.ENSP00000365280"/>
<dbReference type="ChEMBL" id="CHEMBL1075116"/>
<dbReference type="iPTMnet" id="P41134"/>
<dbReference type="PhosphoSitePlus" id="P41134"/>
<dbReference type="BioMuta" id="ID1"/>
<dbReference type="DMDM" id="21264450"/>
<dbReference type="jPOST" id="P41134"/>
<dbReference type="MassIVE" id="P41134"/>
<dbReference type="PaxDb" id="9606-ENSP00000365280"/>
<dbReference type="PeptideAtlas" id="P41134"/>
<dbReference type="ProteomicsDB" id="55400">
    <molecule id="P41134-1"/>
</dbReference>
<dbReference type="ProteomicsDB" id="55401">
    <molecule id="P41134-2"/>
</dbReference>
<dbReference type="Pumba" id="P41134"/>
<dbReference type="Antibodypedia" id="25205">
    <property type="antibodies" value="415 antibodies from 37 providers"/>
</dbReference>
<dbReference type="DNASU" id="3397"/>
<dbReference type="Ensembl" id="ENST00000376105.4">
    <molecule id="P41134-2"/>
    <property type="protein sequence ID" value="ENSP00000365273.3"/>
    <property type="gene ID" value="ENSG00000125968.10"/>
</dbReference>
<dbReference type="Ensembl" id="ENST00000376112.4">
    <molecule id="P41134-1"/>
    <property type="protein sequence ID" value="ENSP00000365280.3"/>
    <property type="gene ID" value="ENSG00000125968.10"/>
</dbReference>
<dbReference type="Ensembl" id="ENST00000718307.1">
    <molecule id="P41134-1"/>
    <property type="protein sequence ID" value="ENSP00000520744.1"/>
    <property type="gene ID" value="ENSG00000125968.10"/>
</dbReference>
<dbReference type="Ensembl" id="ENST00000718308.1">
    <molecule id="P41134-1"/>
    <property type="protein sequence ID" value="ENSP00000520745.1"/>
    <property type="gene ID" value="ENSG00000125968.10"/>
</dbReference>
<dbReference type="GeneID" id="3397"/>
<dbReference type="KEGG" id="hsa:3397"/>
<dbReference type="MANE-Select" id="ENST00000376112.4">
    <property type="protein sequence ID" value="ENSP00000365280.3"/>
    <property type="RefSeq nucleotide sequence ID" value="NM_002165.4"/>
    <property type="RefSeq protein sequence ID" value="NP_002156.2"/>
</dbReference>
<dbReference type="UCSC" id="uc002wwg.3">
    <molecule id="P41134-1"/>
    <property type="organism name" value="human"/>
</dbReference>
<dbReference type="AGR" id="HGNC:5360"/>
<dbReference type="CTD" id="3397"/>
<dbReference type="DisGeNET" id="3397"/>
<dbReference type="GeneCards" id="ID1"/>
<dbReference type="HGNC" id="HGNC:5360">
    <property type="gene designation" value="ID1"/>
</dbReference>
<dbReference type="HPA" id="ENSG00000125968">
    <property type="expression patterns" value="Low tissue specificity"/>
</dbReference>
<dbReference type="MIM" id="600349">
    <property type="type" value="gene"/>
</dbReference>
<dbReference type="neXtProt" id="NX_P41134"/>
<dbReference type="OpenTargets" id="ENSG00000125968"/>
<dbReference type="PharmGKB" id="PA29608"/>
<dbReference type="VEuPathDB" id="HostDB:ENSG00000125968"/>
<dbReference type="eggNOG" id="ENOG502RZP5">
    <property type="taxonomic scope" value="Eukaryota"/>
</dbReference>
<dbReference type="GeneTree" id="ENSGT00940000161109"/>
<dbReference type="HOGENOM" id="CLU_116790_0_0_1"/>
<dbReference type="InParanoid" id="P41134"/>
<dbReference type="OMA" id="LDMKGCY"/>
<dbReference type="OrthoDB" id="10047910at2759"/>
<dbReference type="PAN-GO" id="P41134">
    <property type="GO annotations" value="5 GO annotations based on evolutionary models"/>
</dbReference>
<dbReference type="PhylomeDB" id="P41134"/>
<dbReference type="TreeFam" id="TF326217"/>
<dbReference type="PathwayCommons" id="P41134"/>
<dbReference type="Reactome" id="R-HSA-2559585">
    <property type="pathway name" value="Oncogene Induced Senescence"/>
</dbReference>
<dbReference type="Reactome" id="R-HSA-9031628">
    <property type="pathway name" value="NGF-stimulated transcription"/>
</dbReference>
<dbReference type="Reactome" id="R-HSA-9856649">
    <property type="pathway name" value="Transcriptional and post-translational regulation of MITF-M expression and activity"/>
</dbReference>
<dbReference type="SignaLink" id="P41134"/>
<dbReference type="SIGNOR" id="P41134"/>
<dbReference type="BioGRID-ORCS" id="3397">
    <property type="hits" value="31 hits in 1174 CRISPR screens"/>
</dbReference>
<dbReference type="CD-CODE" id="8C2F96ED">
    <property type="entry name" value="Centrosome"/>
</dbReference>
<dbReference type="ChiTaRS" id="ID1">
    <property type="organism name" value="human"/>
</dbReference>
<dbReference type="GeneWiki" id="ID1"/>
<dbReference type="GenomeRNAi" id="3397"/>
<dbReference type="Pharos" id="P41134">
    <property type="development level" value="Tbio"/>
</dbReference>
<dbReference type="PRO" id="PR:P41134"/>
<dbReference type="Proteomes" id="UP000005640">
    <property type="component" value="Chromosome 20"/>
</dbReference>
<dbReference type="RNAct" id="P41134">
    <property type="molecule type" value="protein"/>
</dbReference>
<dbReference type="Bgee" id="ENSG00000125968">
    <property type="expression patterns" value="Expressed in seminal vesicle and 196 other cell types or tissues"/>
</dbReference>
<dbReference type="GO" id="GO:0005737">
    <property type="term" value="C:cytoplasm"/>
    <property type="evidence" value="ECO:0007669"/>
    <property type="project" value="UniProtKB-SubCell"/>
</dbReference>
<dbReference type="GO" id="GO:0005654">
    <property type="term" value="C:nucleoplasm"/>
    <property type="evidence" value="ECO:0000314"/>
    <property type="project" value="HPA"/>
</dbReference>
<dbReference type="GO" id="GO:0005634">
    <property type="term" value="C:nucleus"/>
    <property type="evidence" value="ECO:0000318"/>
    <property type="project" value="GO_Central"/>
</dbReference>
<dbReference type="GO" id="GO:0046983">
    <property type="term" value="F:protein dimerization activity"/>
    <property type="evidence" value="ECO:0007669"/>
    <property type="project" value="InterPro"/>
</dbReference>
<dbReference type="GO" id="GO:0003714">
    <property type="term" value="F:transcription corepressor activity"/>
    <property type="evidence" value="ECO:0000318"/>
    <property type="project" value="GO_Central"/>
</dbReference>
<dbReference type="GO" id="GO:0140416">
    <property type="term" value="F:transcription regulator inhibitor activity"/>
    <property type="evidence" value="ECO:0000314"/>
    <property type="project" value="ARUK-UCL"/>
</dbReference>
<dbReference type="GO" id="GO:0001525">
    <property type="term" value="P:angiogenesis"/>
    <property type="evidence" value="ECO:0000304"/>
    <property type="project" value="BHF-UCL"/>
</dbReference>
<dbReference type="GO" id="GO:0043534">
    <property type="term" value="P:blood vessel endothelial cell migration"/>
    <property type="evidence" value="ECO:0000304"/>
    <property type="project" value="BHF-UCL"/>
</dbReference>
<dbReference type="GO" id="GO:0048514">
    <property type="term" value="P:blood vessel morphogenesis"/>
    <property type="evidence" value="ECO:0000304"/>
    <property type="project" value="BHF-UCL"/>
</dbReference>
<dbReference type="GO" id="GO:0030509">
    <property type="term" value="P:BMP signaling pathway"/>
    <property type="evidence" value="ECO:0007669"/>
    <property type="project" value="Ensembl"/>
</dbReference>
<dbReference type="GO" id="GO:0007623">
    <property type="term" value="P:circadian rhythm"/>
    <property type="evidence" value="ECO:0007669"/>
    <property type="project" value="Ensembl"/>
</dbReference>
<dbReference type="GO" id="GO:0032963">
    <property type="term" value="P:collagen metabolic process"/>
    <property type="evidence" value="ECO:0007669"/>
    <property type="project" value="Ensembl"/>
</dbReference>
<dbReference type="GO" id="GO:0072577">
    <property type="term" value="P:endothelial cell apoptotic process"/>
    <property type="evidence" value="ECO:0007669"/>
    <property type="project" value="Ensembl"/>
</dbReference>
<dbReference type="GO" id="GO:0001886">
    <property type="term" value="P:endothelial cell morphogenesis"/>
    <property type="evidence" value="ECO:0007669"/>
    <property type="project" value="Ensembl"/>
</dbReference>
<dbReference type="GO" id="GO:0007507">
    <property type="term" value="P:heart development"/>
    <property type="evidence" value="ECO:0007669"/>
    <property type="project" value="Ensembl"/>
</dbReference>
<dbReference type="GO" id="GO:0060425">
    <property type="term" value="P:lung morphogenesis"/>
    <property type="evidence" value="ECO:0007669"/>
    <property type="project" value="Ensembl"/>
</dbReference>
<dbReference type="GO" id="GO:0060426">
    <property type="term" value="P:lung vasculature development"/>
    <property type="evidence" value="ECO:0007669"/>
    <property type="project" value="Ensembl"/>
</dbReference>
<dbReference type="GO" id="GO:0120163">
    <property type="term" value="P:negative regulation of cold-induced thermogenesis"/>
    <property type="evidence" value="ECO:0000250"/>
    <property type="project" value="YuBioLab"/>
</dbReference>
<dbReference type="GO" id="GO:0043433">
    <property type="term" value="P:negative regulation of DNA-binding transcription factor activity"/>
    <property type="evidence" value="ECO:0000314"/>
    <property type="project" value="GDB"/>
</dbReference>
<dbReference type="GO" id="GO:0045892">
    <property type="term" value="P:negative regulation of DNA-templated transcription"/>
    <property type="evidence" value="ECO:0000314"/>
    <property type="project" value="GDB"/>
</dbReference>
<dbReference type="GO" id="GO:2000352">
    <property type="term" value="P:negative regulation of endothelial cell apoptotic process"/>
    <property type="evidence" value="ECO:0007669"/>
    <property type="project" value="Ensembl"/>
</dbReference>
<dbReference type="GO" id="GO:0010629">
    <property type="term" value="P:negative regulation of gene expression"/>
    <property type="evidence" value="ECO:0007669"/>
    <property type="project" value="Ensembl"/>
</dbReference>
<dbReference type="GO" id="GO:0045668">
    <property type="term" value="P:negative regulation of osteoblast differentiation"/>
    <property type="evidence" value="ECO:0007669"/>
    <property type="project" value="Ensembl"/>
</dbReference>
<dbReference type="GO" id="GO:0000122">
    <property type="term" value="P:negative regulation of transcription by RNA polymerase II"/>
    <property type="evidence" value="ECO:0000314"/>
    <property type="project" value="ARUK-UCL"/>
</dbReference>
<dbReference type="GO" id="GO:0010621">
    <property type="term" value="P:negative regulation of transcription by transcription factor localization"/>
    <property type="evidence" value="ECO:0000304"/>
    <property type="project" value="BHF-UCL"/>
</dbReference>
<dbReference type="GO" id="GO:0030182">
    <property type="term" value="P:neuron differentiation"/>
    <property type="evidence" value="ECO:0000318"/>
    <property type="project" value="GO_Central"/>
</dbReference>
<dbReference type="GO" id="GO:0010628">
    <property type="term" value="P:positive regulation of gene expression"/>
    <property type="evidence" value="ECO:0007669"/>
    <property type="project" value="Ensembl"/>
</dbReference>
<dbReference type="GO" id="GO:0031648">
    <property type="term" value="P:protein destabilization"/>
    <property type="evidence" value="ECO:0007669"/>
    <property type="project" value="Ensembl"/>
</dbReference>
<dbReference type="GO" id="GO:0045765">
    <property type="term" value="P:regulation of angiogenesis"/>
    <property type="evidence" value="ECO:0007669"/>
    <property type="project" value="Ensembl"/>
</dbReference>
<dbReference type="GO" id="GO:0043408">
    <property type="term" value="P:regulation of MAPK cascade"/>
    <property type="evidence" value="ECO:0007669"/>
    <property type="project" value="Ensembl"/>
</dbReference>
<dbReference type="GO" id="GO:0046677">
    <property type="term" value="P:response to antibiotic"/>
    <property type="evidence" value="ECO:0007669"/>
    <property type="project" value="Ensembl"/>
</dbReference>
<dbReference type="GO" id="GO:0007179">
    <property type="term" value="P:transforming growth factor beta receptor signaling pathway"/>
    <property type="evidence" value="ECO:0000304"/>
    <property type="project" value="BHF-UCL"/>
</dbReference>
<dbReference type="CDD" id="cd19691">
    <property type="entry name" value="bHLH_dnHLH_ID1"/>
    <property type="match status" value="1"/>
</dbReference>
<dbReference type="FunFam" id="4.10.280.10:FF:000039">
    <property type="entry name" value="DNA-binding protein inhibitor ID-3"/>
    <property type="match status" value="1"/>
</dbReference>
<dbReference type="Gene3D" id="4.10.280.10">
    <property type="entry name" value="Helix-loop-helix DNA-binding domain"/>
    <property type="match status" value="1"/>
</dbReference>
<dbReference type="InterPro" id="IPR011598">
    <property type="entry name" value="bHLH_dom"/>
</dbReference>
<dbReference type="InterPro" id="IPR026052">
    <property type="entry name" value="DNA-bd_prot-inh"/>
</dbReference>
<dbReference type="InterPro" id="IPR036638">
    <property type="entry name" value="HLH_DNA-bd_sf"/>
</dbReference>
<dbReference type="PANTHER" id="PTHR11723">
    <property type="entry name" value="DNA-BINDING PROTEIN INHIBITOR"/>
    <property type="match status" value="1"/>
</dbReference>
<dbReference type="PANTHER" id="PTHR11723:SF4">
    <property type="entry name" value="DNA-BINDING PROTEIN INHIBITOR ID-1"/>
    <property type="match status" value="1"/>
</dbReference>
<dbReference type="Pfam" id="PF00010">
    <property type="entry name" value="HLH"/>
    <property type="match status" value="1"/>
</dbReference>
<dbReference type="SMART" id="SM00353">
    <property type="entry name" value="HLH"/>
    <property type="match status" value="1"/>
</dbReference>
<dbReference type="SUPFAM" id="SSF47459">
    <property type="entry name" value="HLH, helix-loop-helix DNA-binding domain"/>
    <property type="match status" value="1"/>
</dbReference>
<dbReference type="PROSITE" id="PS50888">
    <property type="entry name" value="BHLH"/>
    <property type="match status" value="1"/>
</dbReference>
<comment type="function">
    <text evidence="1">Transcriptional regulator (lacking a basic DNA binding domain) which negatively regulates the basic helix-loop-helix (bHLH) transcription factors by forming heterodimers and inhibiting their DNA binding and transcriptional activity. Implicated in regulating a variety of cellular processes, including cellular growth, senescence, differentiation, apoptosis, angiogenesis, and neoplastic transformation. Inhibits skeletal muscle and cardiac myocyte differentiation. Regulates the circadian clock by repressing the transcriptional activator activity of the CLOCK-BMAL1 heterodimer (By similarity).</text>
</comment>
<comment type="subunit">
    <text evidence="1 3">Heterodimer with other HLH proteins. Interacts with COPS5, IFI204, GATA4 and NKX2-5 (By similarity). Interacts with CLOCK and BMAL1.</text>
</comment>
<comment type="interaction">
    <interactant intactId="EBI-1215527">
        <id>P41134</id>
    </interactant>
    <interactant intactId="EBI-12108222">
        <id>Q9NQ33</id>
        <label>ASCL3</label>
    </interactant>
    <organismsDiffer>false</organismsDiffer>
    <experiments>3</experiments>
</comment>
<comment type="interaction">
    <interactant intactId="EBI-1215527">
        <id>P41134</id>
    </interactant>
    <interactant intactId="EBI-1215506">
        <id>O14936</id>
        <label>CASK</label>
    </interactant>
    <organismsDiffer>false</organismsDiffer>
    <experiments>3</experiments>
</comment>
<comment type="interaction">
    <interactant intactId="EBI-1215527">
        <id>P41134</id>
    </interactant>
    <interactant intactId="EBI-603614">
        <id>Q03135</id>
        <label>CAV1</label>
    </interactant>
    <organismsDiffer>false</organismsDiffer>
    <experiments>6</experiments>
</comment>
<comment type="interaction">
    <interactant intactId="EBI-1215527">
        <id>P41134</id>
    </interactant>
    <interactant intactId="EBI-25837549">
        <id>P28329-3</id>
        <label>CHAT</label>
    </interactant>
    <organismsDiffer>false</organismsDiffer>
    <experiments>3</experiments>
</comment>
<comment type="interaction">
    <interactant intactId="EBI-1215527">
        <id>P41134</id>
    </interactant>
    <interactant intactId="EBI-348399">
        <id>P22607</id>
        <label>FGFR3</label>
    </interactant>
    <organismsDiffer>false</organismsDiffer>
    <experiments>3</experiments>
</comment>
<comment type="interaction">
    <interactant intactId="EBI-1215527">
        <id>P41134</id>
    </interactant>
    <interactant intactId="EBI-351506">
        <id>P06396</id>
        <label>GSN</label>
    </interactant>
    <organismsDiffer>false</organismsDiffer>
    <experiments>3</experiments>
</comment>
<comment type="interaction">
    <interactant intactId="EBI-1215527">
        <id>P41134</id>
    </interactant>
    <interactant intactId="EBI-11991020">
        <id>A6NI15</id>
        <label>MSGN1</label>
    </interactant>
    <organismsDiffer>false</organismsDiffer>
    <experiments>5</experiments>
</comment>
<comment type="interaction">
    <interactant intactId="EBI-1215527">
        <id>P41134</id>
    </interactant>
    <interactant intactId="EBI-17491620">
        <id>P13349</id>
        <label>MYF5</label>
    </interactant>
    <organismsDiffer>false</organismsDiffer>
    <experiments>5</experiments>
</comment>
<comment type="interaction">
    <interactant intactId="EBI-1215527">
        <id>P41134</id>
    </interactant>
    <interactant intactId="EBI-3906629">
        <id>P15173</id>
        <label>MYOG</label>
    </interactant>
    <organismsDiffer>false</organismsDiffer>
    <experiments>4</experiments>
</comment>
<comment type="interaction">
    <interactant intactId="EBI-1215527">
        <id>P41134</id>
    </interactant>
    <interactant intactId="EBI-5235340">
        <id>Q7Z699</id>
        <label>SPRED1</label>
    </interactant>
    <organismsDiffer>false</organismsDiffer>
    <experiments>3</experiments>
</comment>
<comment type="interaction">
    <interactant intactId="EBI-1215527">
        <id>P41134</id>
    </interactant>
    <interactant intactId="EBI-722877">
        <id>Q99081</id>
        <label>TCF12</label>
    </interactant>
    <organismsDiffer>false</organismsDiffer>
    <experiments>3</experiments>
</comment>
<comment type="interaction">
    <interactant intactId="EBI-1215527">
        <id>P41134</id>
    </interactant>
    <interactant intactId="EBI-11952764">
        <id>Q99081-3</id>
        <label>TCF12</label>
    </interactant>
    <organismsDiffer>false</organismsDiffer>
    <experiments>3</experiments>
</comment>
<comment type="interaction">
    <interactant intactId="EBI-1215527">
        <id>P41134</id>
    </interactant>
    <interactant intactId="EBI-12000326">
        <id>P15923-3</id>
        <label>TCF3</label>
    </interactant>
    <organismsDiffer>false</organismsDiffer>
    <experiments>3</experiments>
</comment>
<comment type="interaction">
    <interactant intactId="EBI-1215527">
        <id>P41134</id>
    </interactant>
    <interactant intactId="EBI-533224">
        <id>P15884</id>
        <label>TCF4</label>
    </interactant>
    <organismsDiffer>false</organismsDiffer>
    <experiments>4</experiments>
</comment>
<comment type="interaction">
    <interactant intactId="EBI-1215527">
        <id>P41134</id>
    </interactant>
    <interactant intactId="EBI-13636688">
        <id>P15884-3</id>
        <label>TCF4</label>
    </interactant>
    <organismsDiffer>false</organismsDiffer>
    <experiments>3</experiments>
</comment>
<comment type="interaction">
    <interactant intactId="EBI-1215527">
        <id>P41134</id>
    </interactant>
    <interactant intactId="EBI-25900580">
        <id>Q9Y649</id>
    </interactant>
    <organismsDiffer>false</organismsDiffer>
    <experiments>3</experiments>
</comment>
<comment type="subcellular location">
    <subcellularLocation>
        <location evidence="1">Cytoplasm</location>
    </subcellularLocation>
    <subcellularLocation>
        <location>Nucleus</location>
    </subcellularLocation>
</comment>
<comment type="alternative products">
    <event type="alternative splicing"/>
    <isoform>
        <id>P41134-1</id>
        <name>ID-A</name>
        <sequence type="displayed"/>
    </isoform>
    <isoform>
        <id>P41134-2</id>
        <name>ID-B</name>
        <sequence type="described" ref="VSP_002108"/>
    </isoform>
    <text>Additional isoforms seem to exist.</text>
</comment>
<comment type="developmental stage">
    <text>Expression correlates with proliferation in some types of cells.</text>
</comment>
<comment type="online information" name="Atlas of Genetics and Cytogenetics in Oncology and Haematology">
    <link uri="https://atlasgeneticsoncology.org/gene/40914/ID1"/>
</comment>
<organism>
    <name type="scientific">Homo sapiens</name>
    <name type="common">Human</name>
    <dbReference type="NCBI Taxonomy" id="9606"/>
    <lineage>
        <taxon>Eukaryota</taxon>
        <taxon>Metazoa</taxon>
        <taxon>Chordata</taxon>
        <taxon>Craniata</taxon>
        <taxon>Vertebrata</taxon>
        <taxon>Euteleostomi</taxon>
        <taxon>Mammalia</taxon>
        <taxon>Eutheria</taxon>
        <taxon>Euarchontoglires</taxon>
        <taxon>Primates</taxon>
        <taxon>Haplorrhini</taxon>
        <taxon>Catarrhini</taxon>
        <taxon>Hominidae</taxon>
        <taxon>Homo</taxon>
    </lineage>
</organism>